<gene>
    <name evidence="1" type="primary">upp</name>
    <name type="ordered locus">HAPS_1015</name>
</gene>
<evidence type="ECO:0000255" key="1">
    <source>
        <dbReference type="HAMAP-Rule" id="MF_01218"/>
    </source>
</evidence>
<dbReference type="EC" id="2.4.2.9" evidence="1"/>
<dbReference type="EMBL" id="CP001321">
    <property type="protein sequence ID" value="ACL32634.1"/>
    <property type="molecule type" value="Genomic_DNA"/>
</dbReference>
<dbReference type="RefSeq" id="WP_015939573.1">
    <property type="nucleotide sequence ID" value="NC_011852.1"/>
</dbReference>
<dbReference type="SMR" id="B8F5N2"/>
<dbReference type="STRING" id="557723.HAPS_1015"/>
<dbReference type="KEGG" id="hap:HAPS_1015"/>
<dbReference type="PATRIC" id="fig|557723.8.peg.1013"/>
<dbReference type="HOGENOM" id="CLU_067096_2_2_6"/>
<dbReference type="UniPathway" id="UPA00574">
    <property type="reaction ID" value="UER00636"/>
</dbReference>
<dbReference type="Proteomes" id="UP000006743">
    <property type="component" value="Chromosome"/>
</dbReference>
<dbReference type="GO" id="GO:0005525">
    <property type="term" value="F:GTP binding"/>
    <property type="evidence" value="ECO:0007669"/>
    <property type="project" value="UniProtKB-KW"/>
</dbReference>
<dbReference type="GO" id="GO:0000287">
    <property type="term" value="F:magnesium ion binding"/>
    <property type="evidence" value="ECO:0007669"/>
    <property type="project" value="UniProtKB-UniRule"/>
</dbReference>
<dbReference type="GO" id="GO:0004845">
    <property type="term" value="F:uracil phosphoribosyltransferase activity"/>
    <property type="evidence" value="ECO:0007669"/>
    <property type="project" value="UniProtKB-UniRule"/>
</dbReference>
<dbReference type="GO" id="GO:0044206">
    <property type="term" value="P:UMP salvage"/>
    <property type="evidence" value="ECO:0007669"/>
    <property type="project" value="UniProtKB-UniRule"/>
</dbReference>
<dbReference type="GO" id="GO:0006223">
    <property type="term" value="P:uracil salvage"/>
    <property type="evidence" value="ECO:0007669"/>
    <property type="project" value="InterPro"/>
</dbReference>
<dbReference type="CDD" id="cd06223">
    <property type="entry name" value="PRTases_typeI"/>
    <property type="match status" value="1"/>
</dbReference>
<dbReference type="FunFam" id="3.40.50.2020:FF:000003">
    <property type="entry name" value="Uracil phosphoribosyltransferase"/>
    <property type="match status" value="1"/>
</dbReference>
<dbReference type="Gene3D" id="3.40.50.2020">
    <property type="match status" value="1"/>
</dbReference>
<dbReference type="HAMAP" id="MF_01218_B">
    <property type="entry name" value="Upp_B"/>
    <property type="match status" value="1"/>
</dbReference>
<dbReference type="InterPro" id="IPR000836">
    <property type="entry name" value="PRibTrfase_dom"/>
</dbReference>
<dbReference type="InterPro" id="IPR029057">
    <property type="entry name" value="PRTase-like"/>
</dbReference>
<dbReference type="InterPro" id="IPR034332">
    <property type="entry name" value="Upp_B"/>
</dbReference>
<dbReference type="InterPro" id="IPR050054">
    <property type="entry name" value="UPRTase/APRTase"/>
</dbReference>
<dbReference type="InterPro" id="IPR005765">
    <property type="entry name" value="Ura_phspho_trans"/>
</dbReference>
<dbReference type="NCBIfam" id="NF001097">
    <property type="entry name" value="PRK00129.1"/>
    <property type="match status" value="1"/>
</dbReference>
<dbReference type="NCBIfam" id="TIGR01091">
    <property type="entry name" value="upp"/>
    <property type="match status" value="1"/>
</dbReference>
<dbReference type="PANTHER" id="PTHR32315">
    <property type="entry name" value="ADENINE PHOSPHORIBOSYLTRANSFERASE"/>
    <property type="match status" value="1"/>
</dbReference>
<dbReference type="PANTHER" id="PTHR32315:SF4">
    <property type="entry name" value="URACIL PHOSPHORIBOSYLTRANSFERASE, CHLOROPLASTIC"/>
    <property type="match status" value="1"/>
</dbReference>
<dbReference type="Pfam" id="PF14681">
    <property type="entry name" value="UPRTase"/>
    <property type="match status" value="1"/>
</dbReference>
<dbReference type="SUPFAM" id="SSF53271">
    <property type="entry name" value="PRTase-like"/>
    <property type="match status" value="1"/>
</dbReference>
<reference key="1">
    <citation type="journal article" date="2009" name="J. Bacteriol.">
        <title>Complete genome sequence of Haemophilus parasuis SH0165.</title>
        <authorList>
            <person name="Yue M."/>
            <person name="Yang F."/>
            <person name="Yang J."/>
            <person name="Bei W."/>
            <person name="Cai X."/>
            <person name="Chen L."/>
            <person name="Dong J."/>
            <person name="Zhou R."/>
            <person name="Jin M."/>
            <person name="Jin Q."/>
            <person name="Chen H."/>
        </authorList>
    </citation>
    <scope>NUCLEOTIDE SEQUENCE [LARGE SCALE GENOMIC DNA]</scope>
    <source>
        <strain>SH0165</strain>
    </source>
</reference>
<sequence length="208" mass="22334">MKIVEVKHPLIKHKIGLMRAADVSTKDFRALATEVGSLLTYEATSDLETEVVTIEGWNGPVEIERIKGKKVTVVPILRAGLGMMDGVLEHIPSARISVVGIYRNEETLEPVPYFKKLANDVGERLAIVVDPMLATGGSMIATLDLLKAAGCKQIKVLVLVAAPEGIKALEAAHPDIELYTAAIDSHLNENGYIIPGLGDAGDKIFGTK</sequence>
<comment type="function">
    <text evidence="1">Catalyzes the conversion of uracil and 5-phospho-alpha-D-ribose 1-diphosphate (PRPP) to UMP and diphosphate.</text>
</comment>
<comment type="catalytic activity">
    <reaction evidence="1">
        <text>UMP + diphosphate = 5-phospho-alpha-D-ribose 1-diphosphate + uracil</text>
        <dbReference type="Rhea" id="RHEA:13017"/>
        <dbReference type="ChEBI" id="CHEBI:17568"/>
        <dbReference type="ChEBI" id="CHEBI:33019"/>
        <dbReference type="ChEBI" id="CHEBI:57865"/>
        <dbReference type="ChEBI" id="CHEBI:58017"/>
        <dbReference type="EC" id="2.4.2.9"/>
    </reaction>
</comment>
<comment type="cofactor">
    <cofactor evidence="1">
        <name>Mg(2+)</name>
        <dbReference type="ChEBI" id="CHEBI:18420"/>
    </cofactor>
    <text evidence="1">Binds 1 Mg(2+) ion per subunit. The magnesium is bound as Mg-PRPP.</text>
</comment>
<comment type="activity regulation">
    <text evidence="1">Allosterically activated by GTP.</text>
</comment>
<comment type="pathway">
    <text evidence="1">Pyrimidine metabolism; UMP biosynthesis via salvage pathway; UMP from uracil: step 1/1.</text>
</comment>
<comment type="similarity">
    <text evidence="1">Belongs to the UPRTase family.</text>
</comment>
<keyword id="KW-0021">Allosteric enzyme</keyword>
<keyword id="KW-0328">Glycosyltransferase</keyword>
<keyword id="KW-0342">GTP-binding</keyword>
<keyword id="KW-0460">Magnesium</keyword>
<keyword id="KW-0547">Nucleotide-binding</keyword>
<keyword id="KW-1185">Reference proteome</keyword>
<keyword id="KW-0808">Transferase</keyword>
<protein>
    <recommendedName>
        <fullName evidence="1">Uracil phosphoribosyltransferase</fullName>
        <ecNumber evidence="1">2.4.2.9</ecNumber>
    </recommendedName>
    <alternativeName>
        <fullName evidence="1">UMP pyrophosphorylase</fullName>
    </alternativeName>
    <alternativeName>
        <fullName evidence="1">UPRTase</fullName>
    </alternativeName>
</protein>
<name>UPP_GLAP5</name>
<proteinExistence type="inferred from homology"/>
<organism>
    <name type="scientific">Glaesserella parasuis serovar 5 (strain SH0165)</name>
    <name type="common">Haemophilus parasuis</name>
    <dbReference type="NCBI Taxonomy" id="557723"/>
    <lineage>
        <taxon>Bacteria</taxon>
        <taxon>Pseudomonadati</taxon>
        <taxon>Pseudomonadota</taxon>
        <taxon>Gammaproteobacteria</taxon>
        <taxon>Pasteurellales</taxon>
        <taxon>Pasteurellaceae</taxon>
        <taxon>Glaesserella</taxon>
    </lineage>
</organism>
<accession>B8F5N2</accession>
<feature type="chain" id="PRO_1000164826" description="Uracil phosphoribosyltransferase">
    <location>
        <begin position="1"/>
        <end position="208"/>
    </location>
</feature>
<feature type="binding site" evidence="1">
    <location>
        <position position="78"/>
    </location>
    <ligand>
        <name>5-phospho-alpha-D-ribose 1-diphosphate</name>
        <dbReference type="ChEBI" id="CHEBI:58017"/>
    </ligand>
</feature>
<feature type="binding site" evidence="1">
    <location>
        <position position="103"/>
    </location>
    <ligand>
        <name>5-phospho-alpha-D-ribose 1-diphosphate</name>
        <dbReference type="ChEBI" id="CHEBI:58017"/>
    </ligand>
</feature>
<feature type="binding site" evidence="1">
    <location>
        <begin position="130"/>
        <end position="138"/>
    </location>
    <ligand>
        <name>5-phospho-alpha-D-ribose 1-diphosphate</name>
        <dbReference type="ChEBI" id="CHEBI:58017"/>
    </ligand>
</feature>
<feature type="binding site" evidence="1">
    <location>
        <position position="193"/>
    </location>
    <ligand>
        <name>uracil</name>
        <dbReference type="ChEBI" id="CHEBI:17568"/>
    </ligand>
</feature>
<feature type="binding site" evidence="1">
    <location>
        <begin position="198"/>
        <end position="200"/>
    </location>
    <ligand>
        <name>uracil</name>
        <dbReference type="ChEBI" id="CHEBI:17568"/>
    </ligand>
</feature>
<feature type="binding site" evidence="1">
    <location>
        <position position="199"/>
    </location>
    <ligand>
        <name>5-phospho-alpha-D-ribose 1-diphosphate</name>
        <dbReference type="ChEBI" id="CHEBI:58017"/>
    </ligand>
</feature>